<comment type="cofactor">
    <cofactor evidence="1">
        <name>Fe cation</name>
        <dbReference type="ChEBI" id="CHEBI:24875"/>
    </cofactor>
</comment>
<comment type="pathway">
    <text>Lipid metabolism; polyunsaturated fatty acid biosynthesis.</text>
</comment>
<comment type="subcellular location">
    <subcellularLocation>
        <location evidence="1">Endoplasmic reticulum membrane</location>
        <topology evidence="1">Multi-pass membrane protein</topology>
    </subcellularLocation>
</comment>
<comment type="domain">
    <text evidence="1">The histidine box domains may contain the active site and/or be involved in metal ion binding.</text>
</comment>
<comment type="similarity">
    <text evidence="3">Belongs to the fatty acid desaturase type 1 family.</text>
</comment>
<feature type="chain" id="PRO_0000185427" description="Delta-9 desaturase-like 1 protein">
    <location>
        <begin position="1"/>
        <end position="299"/>
    </location>
</feature>
<feature type="transmembrane region" description="Helical" evidence="2">
    <location>
        <begin position="31"/>
        <end position="51"/>
    </location>
</feature>
<feature type="transmembrane region" description="Helical" evidence="2">
    <location>
        <begin position="55"/>
        <end position="75"/>
    </location>
</feature>
<feature type="transmembrane region" description="Helical" evidence="2">
    <location>
        <begin position="174"/>
        <end position="194"/>
    </location>
</feature>
<feature type="transmembrane region" description="Helical" evidence="2">
    <location>
        <begin position="198"/>
        <end position="218"/>
    </location>
</feature>
<feature type="transmembrane region" description="Helical" evidence="2">
    <location>
        <begin position="262"/>
        <end position="282"/>
    </location>
</feature>
<feature type="short sequence motif" description="Histidine box-1">
    <location>
        <begin position="77"/>
        <end position="82"/>
    </location>
</feature>
<feature type="short sequence motif" description="Histidine box-2">
    <location>
        <begin position="114"/>
        <end position="118"/>
    </location>
</feature>
<feature type="short sequence motif" description="Histidine box-3">
    <location>
        <begin position="246"/>
        <end position="250"/>
    </location>
</feature>
<feature type="sequence conflict" description="In Ref. 3; AAM63203." evidence="3" ref="3">
    <original>F</original>
    <variation>L</variation>
    <location>
        <position position="23"/>
    </location>
</feature>
<feature type="sequence conflict" description="In Ref. 3; AAM63203." evidence="3" ref="3">
    <original>I</original>
    <variation>L</variation>
    <location>
        <position position="33"/>
    </location>
</feature>
<sequence>MGDTTKDDGSSQSKAVRGEKRAFFFRKWTRIDIARASAVGAVHLLCLLAPFNYKWEALRFGVILAIVTSLSITFSYHRNLTHKSFKLPKWLEYPFAYSALFALQGHPIDWVSTHRFHHQFTDSDRDPHSPIEGFWFSHVFWIFDTSYIREKCGGRDNVMDLKQQWFYRFLRNTIGLHILTFWTLVYLWGGLPYLTCGVGVGGTIGYNGTWLINSACHIWGSRAWNTKDTSRNIWWLGPFTMGESWHNNHHAFEASARHGLEWYQVDLTWYLICFFQALGLATDVKLPTDAQKRKLAFAR</sequence>
<evidence type="ECO:0000250" key="1"/>
<evidence type="ECO:0000255" key="2"/>
<evidence type="ECO:0000305" key="3"/>
<gene>
    <name type="ordered locus">At1g06090</name>
    <name type="ORF">T21E18.14</name>
    <name type="ORF">T21E18_11</name>
</gene>
<name>ADSL1_ARATH</name>
<keyword id="KW-0256">Endoplasmic reticulum</keyword>
<keyword id="KW-0275">Fatty acid biosynthesis</keyword>
<keyword id="KW-0276">Fatty acid metabolism</keyword>
<keyword id="KW-0408">Iron</keyword>
<keyword id="KW-0444">Lipid biosynthesis</keyword>
<keyword id="KW-0443">Lipid metabolism</keyword>
<keyword id="KW-0472">Membrane</keyword>
<keyword id="KW-0560">Oxidoreductase</keyword>
<keyword id="KW-1185">Reference proteome</keyword>
<keyword id="KW-0812">Transmembrane</keyword>
<keyword id="KW-1133">Transmembrane helix</keyword>
<protein>
    <recommendedName>
        <fullName>Delta-9 desaturase-like 1 protein</fullName>
        <ecNumber>1.14.19.-</ecNumber>
    </recommendedName>
</protein>
<accession>Q9LND9</accession>
<accession>Q8LDI2</accession>
<dbReference type="EC" id="1.14.19.-"/>
<dbReference type="EMBL" id="AC024174">
    <property type="protein sequence ID" value="AAF80132.1"/>
    <property type="molecule type" value="Genomic_DNA"/>
</dbReference>
<dbReference type="EMBL" id="CP002684">
    <property type="protein sequence ID" value="AEE27938.1"/>
    <property type="molecule type" value="Genomic_DNA"/>
</dbReference>
<dbReference type="EMBL" id="AY085993">
    <property type="protein sequence ID" value="AAM63203.1"/>
    <property type="molecule type" value="mRNA"/>
</dbReference>
<dbReference type="PIR" id="B86196">
    <property type="entry name" value="B86196"/>
</dbReference>
<dbReference type="RefSeq" id="NP_172099.1">
    <property type="nucleotide sequence ID" value="NM_100490.4"/>
</dbReference>
<dbReference type="SMR" id="Q9LND9"/>
<dbReference type="FunCoup" id="Q9LND9">
    <property type="interactions" value="307"/>
</dbReference>
<dbReference type="STRING" id="3702.Q9LND9"/>
<dbReference type="GlyGen" id="Q9LND9">
    <property type="glycosylation" value="1 site"/>
</dbReference>
<dbReference type="PaxDb" id="3702-AT1G06090.1"/>
<dbReference type="ProteomicsDB" id="244715"/>
<dbReference type="EnsemblPlants" id="AT1G06090.1">
    <property type="protein sequence ID" value="AT1G06090.1"/>
    <property type="gene ID" value="AT1G06090"/>
</dbReference>
<dbReference type="GeneID" id="837118"/>
<dbReference type="Gramene" id="AT1G06090.1">
    <property type="protein sequence ID" value="AT1G06090.1"/>
    <property type="gene ID" value="AT1G06090"/>
</dbReference>
<dbReference type="KEGG" id="ath:AT1G06090"/>
<dbReference type="Araport" id="AT1G06090"/>
<dbReference type="TAIR" id="AT1G06090"/>
<dbReference type="eggNOG" id="KOG1600">
    <property type="taxonomic scope" value="Eukaryota"/>
</dbReference>
<dbReference type="HOGENOM" id="CLU_027359_1_0_1"/>
<dbReference type="InParanoid" id="Q9LND9"/>
<dbReference type="OMA" id="GVIINWF"/>
<dbReference type="PhylomeDB" id="Q9LND9"/>
<dbReference type="BioCyc" id="ARA:AT1G06090-MONOMER"/>
<dbReference type="UniPathway" id="UPA00658"/>
<dbReference type="PRO" id="PR:Q9LND9"/>
<dbReference type="Proteomes" id="UP000006548">
    <property type="component" value="Chromosome 1"/>
</dbReference>
<dbReference type="ExpressionAtlas" id="Q9LND9">
    <property type="expression patterns" value="baseline and differential"/>
</dbReference>
<dbReference type="GO" id="GO:0005789">
    <property type="term" value="C:endoplasmic reticulum membrane"/>
    <property type="evidence" value="ECO:0007669"/>
    <property type="project" value="UniProtKB-SubCell"/>
</dbReference>
<dbReference type="GO" id="GO:0016717">
    <property type="term" value="F:oxidoreductase activity, acting on paired donors, with oxidation of a pair of donors resulting in the reduction of molecular oxygen to two molecules of water"/>
    <property type="evidence" value="ECO:0007669"/>
    <property type="project" value="InterPro"/>
</dbReference>
<dbReference type="GO" id="GO:0006636">
    <property type="term" value="P:unsaturated fatty acid biosynthetic process"/>
    <property type="evidence" value="ECO:0007669"/>
    <property type="project" value="UniProtKB-UniPathway"/>
</dbReference>
<dbReference type="CDD" id="cd03505">
    <property type="entry name" value="Delta9-FADS-like"/>
    <property type="match status" value="1"/>
</dbReference>
<dbReference type="InterPro" id="IPR015876">
    <property type="entry name" value="Acyl-CoA_DS"/>
</dbReference>
<dbReference type="InterPro" id="IPR005804">
    <property type="entry name" value="FA_desaturase_dom"/>
</dbReference>
<dbReference type="PANTHER" id="PTHR11351">
    <property type="entry name" value="ACYL-COA DESATURASE"/>
    <property type="match status" value="1"/>
</dbReference>
<dbReference type="PANTHER" id="PTHR11351:SF71">
    <property type="entry name" value="DELTA-9 DESATURASE-LIKE 1 PROTEIN-RELATED"/>
    <property type="match status" value="1"/>
</dbReference>
<dbReference type="Pfam" id="PF00487">
    <property type="entry name" value="FA_desaturase"/>
    <property type="match status" value="1"/>
</dbReference>
<dbReference type="PRINTS" id="PR00075">
    <property type="entry name" value="FACDDSATRASE"/>
</dbReference>
<proteinExistence type="evidence at transcript level"/>
<reference key="1">
    <citation type="journal article" date="2000" name="Nature">
        <title>Sequence and analysis of chromosome 1 of the plant Arabidopsis thaliana.</title>
        <authorList>
            <person name="Theologis A."/>
            <person name="Ecker J.R."/>
            <person name="Palm C.J."/>
            <person name="Federspiel N.A."/>
            <person name="Kaul S."/>
            <person name="White O."/>
            <person name="Alonso J."/>
            <person name="Altafi H."/>
            <person name="Araujo R."/>
            <person name="Bowman C.L."/>
            <person name="Brooks S.Y."/>
            <person name="Buehler E."/>
            <person name="Chan A."/>
            <person name="Chao Q."/>
            <person name="Chen H."/>
            <person name="Cheuk R.F."/>
            <person name="Chin C.W."/>
            <person name="Chung M.K."/>
            <person name="Conn L."/>
            <person name="Conway A.B."/>
            <person name="Conway A.R."/>
            <person name="Creasy T.H."/>
            <person name="Dewar K."/>
            <person name="Dunn P."/>
            <person name="Etgu P."/>
            <person name="Feldblyum T.V."/>
            <person name="Feng J.-D."/>
            <person name="Fong B."/>
            <person name="Fujii C.Y."/>
            <person name="Gill J.E."/>
            <person name="Goldsmith A.D."/>
            <person name="Haas B."/>
            <person name="Hansen N.F."/>
            <person name="Hughes B."/>
            <person name="Huizar L."/>
            <person name="Hunter J.L."/>
            <person name="Jenkins J."/>
            <person name="Johnson-Hopson C."/>
            <person name="Khan S."/>
            <person name="Khaykin E."/>
            <person name="Kim C.J."/>
            <person name="Koo H.L."/>
            <person name="Kremenetskaia I."/>
            <person name="Kurtz D.B."/>
            <person name="Kwan A."/>
            <person name="Lam B."/>
            <person name="Langin-Hooper S."/>
            <person name="Lee A."/>
            <person name="Lee J.M."/>
            <person name="Lenz C.A."/>
            <person name="Li J.H."/>
            <person name="Li Y.-P."/>
            <person name="Lin X."/>
            <person name="Liu S.X."/>
            <person name="Liu Z.A."/>
            <person name="Luros J.S."/>
            <person name="Maiti R."/>
            <person name="Marziali A."/>
            <person name="Militscher J."/>
            <person name="Miranda M."/>
            <person name="Nguyen M."/>
            <person name="Nierman W.C."/>
            <person name="Osborne B.I."/>
            <person name="Pai G."/>
            <person name="Peterson J."/>
            <person name="Pham P.K."/>
            <person name="Rizzo M."/>
            <person name="Rooney T."/>
            <person name="Rowley D."/>
            <person name="Sakano H."/>
            <person name="Salzberg S.L."/>
            <person name="Schwartz J.R."/>
            <person name="Shinn P."/>
            <person name="Southwick A.M."/>
            <person name="Sun H."/>
            <person name="Tallon L.J."/>
            <person name="Tambunga G."/>
            <person name="Toriumi M.J."/>
            <person name="Town C.D."/>
            <person name="Utterback T."/>
            <person name="Van Aken S."/>
            <person name="Vaysberg M."/>
            <person name="Vysotskaia V.S."/>
            <person name="Walker M."/>
            <person name="Wu D."/>
            <person name="Yu G."/>
            <person name="Fraser C.M."/>
            <person name="Venter J.C."/>
            <person name="Davis R.W."/>
        </authorList>
    </citation>
    <scope>NUCLEOTIDE SEQUENCE [LARGE SCALE GENOMIC DNA]</scope>
    <source>
        <strain>cv. Columbia</strain>
    </source>
</reference>
<reference key="2">
    <citation type="journal article" date="2017" name="Plant J.">
        <title>Araport11: a complete reannotation of the Arabidopsis thaliana reference genome.</title>
        <authorList>
            <person name="Cheng C.Y."/>
            <person name="Krishnakumar V."/>
            <person name="Chan A.P."/>
            <person name="Thibaud-Nissen F."/>
            <person name="Schobel S."/>
            <person name="Town C.D."/>
        </authorList>
    </citation>
    <scope>GENOME REANNOTATION</scope>
    <source>
        <strain>cv. Columbia</strain>
    </source>
</reference>
<reference key="3">
    <citation type="submission" date="2002-03" db="EMBL/GenBank/DDBJ databases">
        <title>Full-length cDNA from Arabidopsis thaliana.</title>
        <authorList>
            <person name="Brover V.V."/>
            <person name="Troukhan M.E."/>
            <person name="Alexandrov N.A."/>
            <person name="Lu Y.-P."/>
            <person name="Flavell R.B."/>
            <person name="Feldmann K.A."/>
        </authorList>
    </citation>
    <scope>NUCLEOTIDE SEQUENCE [LARGE SCALE MRNA]</scope>
</reference>
<organism>
    <name type="scientific">Arabidopsis thaliana</name>
    <name type="common">Mouse-ear cress</name>
    <dbReference type="NCBI Taxonomy" id="3702"/>
    <lineage>
        <taxon>Eukaryota</taxon>
        <taxon>Viridiplantae</taxon>
        <taxon>Streptophyta</taxon>
        <taxon>Embryophyta</taxon>
        <taxon>Tracheophyta</taxon>
        <taxon>Spermatophyta</taxon>
        <taxon>Magnoliopsida</taxon>
        <taxon>eudicotyledons</taxon>
        <taxon>Gunneridae</taxon>
        <taxon>Pentapetalae</taxon>
        <taxon>rosids</taxon>
        <taxon>malvids</taxon>
        <taxon>Brassicales</taxon>
        <taxon>Brassicaceae</taxon>
        <taxon>Camelineae</taxon>
        <taxon>Arabidopsis</taxon>
    </lineage>
</organism>